<feature type="chain" id="PRO_0000217299" description="Protein TIC 214">
    <location>
        <begin position="1"/>
        <end position="1793"/>
    </location>
</feature>
<feature type="transmembrane region" description="Helical" evidence="2">
    <location>
        <begin position="11"/>
        <end position="31"/>
    </location>
</feature>
<feature type="transmembrane region" description="Helical" evidence="2">
    <location>
        <begin position="64"/>
        <end position="84"/>
    </location>
</feature>
<feature type="transmembrane region" description="Helical" evidence="2">
    <location>
        <begin position="90"/>
        <end position="112"/>
    </location>
</feature>
<feature type="transmembrane region" description="Helical" evidence="2">
    <location>
        <begin position="129"/>
        <end position="149"/>
    </location>
</feature>
<feature type="transmembrane region" description="Helical" evidence="2">
    <location>
        <begin position="172"/>
        <end position="192"/>
    </location>
</feature>
<feature type="transmembrane region" description="Helical" evidence="2">
    <location>
        <begin position="222"/>
        <end position="242"/>
    </location>
</feature>
<feature type="region of interest" description="Disordered" evidence="3">
    <location>
        <begin position="1504"/>
        <end position="1524"/>
    </location>
</feature>
<name>TI214_LOTJA</name>
<organism>
    <name type="scientific">Lotus japonicus</name>
    <name type="common">Lotus corniculatus var. japonicus</name>
    <dbReference type="NCBI Taxonomy" id="34305"/>
    <lineage>
        <taxon>Eukaryota</taxon>
        <taxon>Viridiplantae</taxon>
        <taxon>Streptophyta</taxon>
        <taxon>Embryophyta</taxon>
        <taxon>Tracheophyta</taxon>
        <taxon>Spermatophyta</taxon>
        <taxon>Magnoliopsida</taxon>
        <taxon>eudicotyledons</taxon>
        <taxon>Gunneridae</taxon>
        <taxon>Pentapetalae</taxon>
        <taxon>rosids</taxon>
        <taxon>fabids</taxon>
        <taxon>Fabales</taxon>
        <taxon>Fabaceae</taxon>
        <taxon>Papilionoideae</taxon>
        <taxon>50 kb inversion clade</taxon>
        <taxon>NPAAA clade</taxon>
        <taxon>Hologalegina</taxon>
        <taxon>robinioid clade</taxon>
        <taxon>Loteae</taxon>
        <taxon>Lotus</taxon>
    </lineage>
</organism>
<dbReference type="EMBL" id="AP002983">
    <property type="protein sequence ID" value="BAB33253.1"/>
    <property type="molecule type" value="Genomic_DNA"/>
</dbReference>
<dbReference type="RefSeq" id="NP_084853.1">
    <property type="nucleotide sequence ID" value="NC_002694.1"/>
</dbReference>
<dbReference type="SMR" id="Q9BBN6"/>
<dbReference type="GeneID" id="802851"/>
<dbReference type="GO" id="GO:0009706">
    <property type="term" value="C:chloroplast inner membrane"/>
    <property type="evidence" value="ECO:0007669"/>
    <property type="project" value="UniProtKB-SubCell"/>
</dbReference>
<dbReference type="GO" id="GO:0015031">
    <property type="term" value="P:protein transport"/>
    <property type="evidence" value="ECO:0007669"/>
    <property type="project" value="UniProtKB-KW"/>
</dbReference>
<dbReference type="InterPro" id="IPR008896">
    <property type="entry name" value="TIC214"/>
</dbReference>
<dbReference type="PANTHER" id="PTHR33163:SF40">
    <property type="entry name" value="PROTEIN TIC 214"/>
    <property type="match status" value="1"/>
</dbReference>
<dbReference type="PANTHER" id="PTHR33163">
    <property type="entry name" value="PROTEIN TIC 214-RELATED"/>
    <property type="match status" value="1"/>
</dbReference>
<dbReference type="Pfam" id="PF05758">
    <property type="entry name" value="Ycf1"/>
    <property type="match status" value="2"/>
</dbReference>
<accession>Q9BBN6</accession>
<geneLocation type="chloroplast"/>
<reference key="1">
    <citation type="journal article" date="2000" name="DNA Res.">
        <title>Complete structure of the chloroplast genome of a legume, Lotus japonicus.</title>
        <authorList>
            <person name="Kato T."/>
            <person name="Kaneko T."/>
            <person name="Sato S."/>
            <person name="Nakamura Y."/>
            <person name="Tabata S."/>
        </authorList>
    </citation>
    <scope>NUCLEOTIDE SEQUENCE [LARGE SCALE GENOMIC DNA]</scope>
    <source>
        <strain>cv. Miyakojima MG-20</strain>
    </source>
</reference>
<gene>
    <name evidence="1" type="primary">TIC214</name>
    <name type="synonym">ycf1</name>
</gene>
<comment type="function">
    <text evidence="1">Involved in protein precursor import into chloroplasts. May be part of an intermediate translocation complex acting as a protein-conducting channel at the inner envelope.</text>
</comment>
<comment type="subunit">
    <text evidence="1">Part of the Tic complex.</text>
</comment>
<comment type="subcellular location">
    <subcellularLocation>
        <location evidence="1">Plastid</location>
        <location evidence="1">Chloroplast inner membrane</location>
        <topology evidence="2">Multi-pass membrane protein</topology>
    </subcellularLocation>
</comment>
<comment type="similarity">
    <text evidence="4">Belongs to the TIC214 family.</text>
</comment>
<keyword id="KW-0150">Chloroplast</keyword>
<keyword id="KW-0472">Membrane</keyword>
<keyword id="KW-0934">Plastid</keyword>
<keyword id="KW-1001">Plastid inner membrane</keyword>
<keyword id="KW-0653">Protein transport</keyword>
<keyword id="KW-0812">Transmembrane</keyword>
<keyword id="KW-1133">Transmembrane helix</keyword>
<keyword id="KW-0813">Transport</keyword>
<protein>
    <recommendedName>
        <fullName evidence="1">Protein TIC 214</fullName>
    </recommendedName>
    <alternativeName>
        <fullName evidence="1">Translocon at the inner envelope membrane of chloroplasts 214</fullName>
        <shortName evidence="1">AtTIC214</shortName>
    </alternativeName>
</protein>
<evidence type="ECO:0000250" key="1">
    <source>
        <dbReference type="UniProtKB" id="P56785"/>
    </source>
</evidence>
<evidence type="ECO:0000255" key="2"/>
<evidence type="ECO:0000256" key="3">
    <source>
        <dbReference type="SAM" id="MobiDB-lite"/>
    </source>
</evidence>
<evidence type="ECO:0000305" key="4"/>
<sequence length="1793" mass="214752">MIFQSFILDNLVSLCLKIINSVIVVGLYYGFMTTFSTGPSYLFLLRAHVMEEGTEKKISATTGFITGQLVMFISIYYAPLHIALDRPHTITVITLPYLLLYFLGNNQKNFLNYVYKNQNSIRHFSIQRIFFQNLFFQLLNPFFLPSSILMRLANIYIFQSNNKVLFLTSSFVGWLIGHVFFMKWIGLMLVWIQEKNNSIKSTVAIRSNKGVLAKFRKSMFQIFLIFFFITCLYYLGRIPPIYFFTPKMSEIKERGEIEKREGEIDIEINSQRAGSKQEQKITAEEKLSPYLFSKKNNNLDKIKEENDIFGFQKPLVTILFDYNRWNRPLRYIKNDRFENVVRNEISQFFFFTCQSDGKERISFTYPPNLSTFQKMMEMKISLFTRDIISYEELSNSWRSTNEEKKKKLTNEFLNRVEVLDKESLPVDIFENRIRLCNDEKKQKYLTKEYDPFLNGPCRGQIQKWFSPPIQKETYKKNSLFINKIHGILFSNTNNYPKFEQKKNIFDRKSLLTDINFFFNLITKFSRKSVSSLNFEGLYLFPKDNKGKMSSKKKKFLFDTIRPDLNDNKIVNLQKCIGINEIVKKLPRWSYNLIDELEQLEGKKKVEYHQIRSRKAKRVVLLTKNSQNDDNYDETTDTDNTEKKKELALIRYSQQPDFRRDIIKGSIRAQRRKTVTCKLFQRSVDSPLFLEKMEKTSFFCFDILDSSKIFFMFKNWIRKKKELKNSDYTDEKAKESQKKEEEKIKKNEKEEKRRIEIGEAWDSIIFAQVIRGCLLITQSILRKYILLPSLIITKNIVRILLFQFPEWSEDFRDWQREMYIKCTYNGVQLSETEFPKKWLTDGIQIKILFPFRLKPWHRSKLRFTEKKKDPLKNKKVKKKNFCFLTIFGMEVELPFSGYPRNRFSFFDPILKELKKKMKKLKNNFFLILKIVNERTKNFITTLKETSKRIIQSILKKVLFLNKKIKKLYNYLFLFRFKKIDELNQNKKNFPITKNNPIIYESTILIQAINKTNCSLTEKKIKAINAKTKKIIKKIERMTKENKGGFLISEINSNSKKTSSNTKGLELEKKILQILQRRNVQLTHKLYSFFKFLLNFMKKVYTDIFLCIVSVPRINVQFFLESTKKIINQSIYNKKTNEEIIDKTNQSIIHFISIINKSSNTKNTNSAANSYEVSALSQAYVFFKISQIQVLNVYKYKFKYVFDYDGRSFFIKDEIKDYFFGIQGIIHSKLRHKNSPVSLKNQWTNWLKVHYQYDLSQNRWSRLVQKNLKNRINKHRLDQNKDLTKCDSYKKTQLIVSKNKKQQVDFLVNLLIQKKIKKQSRYDLLLYKFINYAEKKELSIYGYRSPFQANKKRAISYDYNTQKKEFFDRMDDISIKNYIAEDAIRYIEQNRDRKYFDWVVMDVKIQNNSISNLQFSFFFKFLRFYDAYRNKPWIIPIKFLFLHFSVNQNFNKIKNIIEKKRRIDIFKPWKKKKILEVELETPNRAKKEYTSRVDLNKPSLSNQEKDIEEDYGESDSKKGGKDKNKKKYKNKIEAEVNLLLRKYLNFHLNWKGSLNKRVINNVKVYCLLIRLKNIKQIAISSIQRGELSLDIMMIQNEKDSTLTGFRKKKEFIEKGIFIIEPVRLSRKNNEQFFMYETARLLLIHKSKRQINQRNPEKSDLDKQIFYKNIPPKRDQRITQNKEKKHYALVVIENILSARRRRELRILICFNPRSINSMPRKTIFDNENKINNCCQVFAKNKDLDKEKKILMNLKLILWPNYRLEDLACINRYWFDTYNGSRFSIVRIHMYPRLKMR</sequence>
<proteinExistence type="inferred from homology"/>